<comment type="function">
    <text evidence="1">Catalyzes the cleavage of 5-oxoproline to form L-glutamate coupled to the hydrolysis of ATP to ADP and inorganic phosphate.</text>
</comment>
<comment type="catalytic activity">
    <reaction evidence="1">
        <text>5-oxo-L-proline + ATP + 2 H2O = L-glutamate + ADP + phosphate + H(+)</text>
        <dbReference type="Rhea" id="RHEA:10348"/>
        <dbReference type="ChEBI" id="CHEBI:15377"/>
        <dbReference type="ChEBI" id="CHEBI:15378"/>
        <dbReference type="ChEBI" id="CHEBI:29985"/>
        <dbReference type="ChEBI" id="CHEBI:30616"/>
        <dbReference type="ChEBI" id="CHEBI:43474"/>
        <dbReference type="ChEBI" id="CHEBI:58402"/>
        <dbReference type="ChEBI" id="CHEBI:456216"/>
        <dbReference type="EC" id="3.5.2.9"/>
    </reaction>
</comment>
<comment type="subunit">
    <text evidence="1">Forms a complex composed of PxpA, PxpB and PxpC.</text>
</comment>
<comment type="similarity">
    <text evidence="1">Belongs to the LamB/PxpA family.</text>
</comment>
<reference key="1">
    <citation type="journal article" date="2001" name="Proc. Natl. Acad. Sci. U.S.A.">
        <title>Genome sequence of an industrial microorganism Streptomyces avermitilis: deducing the ability of producing secondary metabolites.</title>
        <authorList>
            <person name="Omura S."/>
            <person name="Ikeda H."/>
            <person name="Ishikawa J."/>
            <person name="Hanamoto A."/>
            <person name="Takahashi C."/>
            <person name="Shinose M."/>
            <person name="Takahashi Y."/>
            <person name="Horikawa H."/>
            <person name="Nakazawa H."/>
            <person name="Osonoe T."/>
            <person name="Kikuchi H."/>
            <person name="Shiba T."/>
            <person name="Sakaki Y."/>
            <person name="Hattori M."/>
        </authorList>
    </citation>
    <scope>NUCLEOTIDE SEQUENCE [LARGE SCALE GENOMIC DNA]</scope>
    <source>
        <strain>ATCC 31267 / DSM 46492 / JCM 5070 / NBRC 14893 / NCIMB 12804 / NRRL 8165 / MA-4680</strain>
    </source>
</reference>
<reference key="2">
    <citation type="journal article" date="2003" name="Nat. Biotechnol.">
        <title>Complete genome sequence and comparative analysis of the industrial microorganism Streptomyces avermitilis.</title>
        <authorList>
            <person name="Ikeda H."/>
            <person name="Ishikawa J."/>
            <person name="Hanamoto A."/>
            <person name="Shinose M."/>
            <person name="Kikuchi H."/>
            <person name="Shiba T."/>
            <person name="Sakaki Y."/>
            <person name="Hattori M."/>
            <person name="Omura S."/>
        </authorList>
    </citation>
    <scope>NUCLEOTIDE SEQUENCE [LARGE SCALE GENOMIC DNA]</scope>
    <source>
        <strain>ATCC 31267 / DSM 46492 / JCM 5070 / NBRC 14893 / NCIMB 12804 / NRRL 8165 / MA-4680</strain>
    </source>
</reference>
<gene>
    <name evidence="1" type="primary">pxpA</name>
    <name type="ordered locus">SAV_6939</name>
</gene>
<dbReference type="EC" id="3.5.2.9" evidence="1"/>
<dbReference type="EMBL" id="BA000030">
    <property type="protein sequence ID" value="BAC74650.1"/>
    <property type="molecule type" value="Genomic_DNA"/>
</dbReference>
<dbReference type="RefSeq" id="WP_010988336.1">
    <property type="nucleotide sequence ID" value="NZ_JZJK01000082.1"/>
</dbReference>
<dbReference type="SMR" id="Q827I5"/>
<dbReference type="GeneID" id="41544012"/>
<dbReference type="KEGG" id="sma:SAVERM_6939"/>
<dbReference type="eggNOG" id="COG1540">
    <property type="taxonomic scope" value="Bacteria"/>
</dbReference>
<dbReference type="HOGENOM" id="CLU_069535_0_0_11"/>
<dbReference type="OrthoDB" id="9773478at2"/>
<dbReference type="Proteomes" id="UP000000428">
    <property type="component" value="Chromosome"/>
</dbReference>
<dbReference type="GO" id="GO:0017168">
    <property type="term" value="F:5-oxoprolinase (ATP-hydrolyzing) activity"/>
    <property type="evidence" value="ECO:0007669"/>
    <property type="project" value="UniProtKB-UniRule"/>
</dbReference>
<dbReference type="GO" id="GO:0005524">
    <property type="term" value="F:ATP binding"/>
    <property type="evidence" value="ECO:0007669"/>
    <property type="project" value="UniProtKB-UniRule"/>
</dbReference>
<dbReference type="GO" id="GO:0005975">
    <property type="term" value="P:carbohydrate metabolic process"/>
    <property type="evidence" value="ECO:0007669"/>
    <property type="project" value="InterPro"/>
</dbReference>
<dbReference type="CDD" id="cd10787">
    <property type="entry name" value="LamB_YcsF_like"/>
    <property type="match status" value="1"/>
</dbReference>
<dbReference type="Gene3D" id="3.20.20.370">
    <property type="entry name" value="Glycoside hydrolase/deacetylase"/>
    <property type="match status" value="1"/>
</dbReference>
<dbReference type="HAMAP" id="MF_00691">
    <property type="entry name" value="PxpA"/>
    <property type="match status" value="1"/>
</dbReference>
<dbReference type="InterPro" id="IPR011330">
    <property type="entry name" value="Glyco_hydro/deAcase_b/a-brl"/>
</dbReference>
<dbReference type="InterPro" id="IPR005501">
    <property type="entry name" value="LamB/YcsF/PxpA-like"/>
</dbReference>
<dbReference type="NCBIfam" id="NF003814">
    <property type="entry name" value="PRK05406.1-3"/>
    <property type="match status" value="1"/>
</dbReference>
<dbReference type="NCBIfam" id="NF003816">
    <property type="entry name" value="PRK05406.1-5"/>
    <property type="match status" value="1"/>
</dbReference>
<dbReference type="PANTHER" id="PTHR30292:SF0">
    <property type="entry name" value="5-OXOPROLINASE SUBUNIT A"/>
    <property type="match status" value="1"/>
</dbReference>
<dbReference type="PANTHER" id="PTHR30292">
    <property type="entry name" value="UNCHARACTERIZED PROTEIN YBGL-RELATED"/>
    <property type="match status" value="1"/>
</dbReference>
<dbReference type="Pfam" id="PF03746">
    <property type="entry name" value="LamB_YcsF"/>
    <property type="match status" value="1"/>
</dbReference>
<dbReference type="SUPFAM" id="SSF88713">
    <property type="entry name" value="Glycoside hydrolase/deacetylase"/>
    <property type="match status" value="1"/>
</dbReference>
<proteinExistence type="inferred from homology"/>
<protein>
    <recommendedName>
        <fullName evidence="1">5-oxoprolinase subunit A</fullName>
        <shortName evidence="1">5-OPase subunit A</shortName>
        <ecNumber evidence="1">3.5.2.9</ecNumber>
    </recommendedName>
    <alternativeName>
        <fullName evidence="1">5-oxoprolinase (ATP-hydrolyzing) subunit A</fullName>
    </alternativeName>
</protein>
<sequence length="250" mass="26377">MIDLNADLGEGFGRWELTDDERLLSVVTSANVACGFHAGDAATMRRVCELAAERGVRIGAQVSYRDLAGFGRRAMDVPPAELAAEVAYQIGALEVFARAAGTRVSYVKPHGALYNRVVHDEGQAGAVVDGVRLADASLPVLGLPGSRLLEVAEKAGLPVVTEAFADRAYTEEGTLVPRGEDGAVVTDPDAVVERSVNLARLGVVDAHSGRRIPVRARSLCLHGDTPGAVELARRVRSRLEASGVRVAAFA</sequence>
<accession>Q827I5</accession>
<feature type="chain" id="PRO_0000185052" description="5-oxoprolinase subunit A">
    <location>
        <begin position="1"/>
        <end position="250"/>
    </location>
</feature>
<name>PXPA_STRAW</name>
<organism>
    <name type="scientific">Streptomyces avermitilis (strain ATCC 31267 / DSM 46492 / JCM 5070 / NBRC 14893 / NCIMB 12804 / NRRL 8165 / MA-4680)</name>
    <dbReference type="NCBI Taxonomy" id="227882"/>
    <lineage>
        <taxon>Bacteria</taxon>
        <taxon>Bacillati</taxon>
        <taxon>Actinomycetota</taxon>
        <taxon>Actinomycetes</taxon>
        <taxon>Kitasatosporales</taxon>
        <taxon>Streptomycetaceae</taxon>
        <taxon>Streptomyces</taxon>
    </lineage>
</organism>
<keyword id="KW-0067">ATP-binding</keyword>
<keyword id="KW-0378">Hydrolase</keyword>
<keyword id="KW-0547">Nucleotide-binding</keyword>
<keyword id="KW-1185">Reference proteome</keyword>
<evidence type="ECO:0000255" key="1">
    <source>
        <dbReference type="HAMAP-Rule" id="MF_00691"/>
    </source>
</evidence>